<keyword id="KW-0963">Cytoplasm</keyword>
<keyword id="KW-0342">GTP-binding</keyword>
<keyword id="KW-0378">Hydrolase</keyword>
<keyword id="KW-0460">Magnesium</keyword>
<keyword id="KW-0479">Metal-binding</keyword>
<keyword id="KW-0547">Nucleotide-binding</keyword>
<keyword id="KW-0630">Potassium</keyword>
<keyword id="KW-1185">Reference proteome</keyword>
<keyword id="KW-0819">tRNA processing</keyword>
<gene>
    <name evidence="1" type="primary">mnmE</name>
    <name evidence="1" type="synonym">trmE</name>
    <name type="ordered locus">Hhal_1231</name>
</gene>
<accession>A1WWE4</accession>
<feature type="chain" id="PRO_0000345797" description="tRNA modification GTPase MnmE">
    <location>
        <begin position="1"/>
        <end position="469"/>
    </location>
</feature>
<feature type="domain" description="TrmE-type G">
    <location>
        <begin position="230"/>
        <end position="392"/>
    </location>
</feature>
<feature type="binding site" evidence="1">
    <location>
        <position position="38"/>
    </location>
    <ligand>
        <name>(6S)-5-formyl-5,6,7,8-tetrahydrofolate</name>
        <dbReference type="ChEBI" id="CHEBI:57457"/>
    </ligand>
</feature>
<feature type="binding site" evidence="1">
    <location>
        <position position="95"/>
    </location>
    <ligand>
        <name>(6S)-5-formyl-5,6,7,8-tetrahydrofolate</name>
        <dbReference type="ChEBI" id="CHEBI:57457"/>
    </ligand>
</feature>
<feature type="binding site" evidence="1">
    <location>
        <position position="134"/>
    </location>
    <ligand>
        <name>(6S)-5-formyl-5,6,7,8-tetrahydrofolate</name>
        <dbReference type="ChEBI" id="CHEBI:57457"/>
    </ligand>
</feature>
<feature type="binding site" evidence="1">
    <location>
        <begin position="240"/>
        <end position="245"/>
    </location>
    <ligand>
        <name>GTP</name>
        <dbReference type="ChEBI" id="CHEBI:37565"/>
    </ligand>
</feature>
<feature type="binding site" evidence="1">
    <location>
        <position position="244"/>
    </location>
    <ligand>
        <name>Mg(2+)</name>
        <dbReference type="ChEBI" id="CHEBI:18420"/>
    </ligand>
</feature>
<feature type="binding site" evidence="1">
    <location>
        <begin position="259"/>
        <end position="265"/>
    </location>
    <ligand>
        <name>GTP</name>
        <dbReference type="ChEBI" id="CHEBI:37565"/>
    </ligand>
</feature>
<feature type="binding site" evidence="1">
    <location>
        <position position="265"/>
    </location>
    <ligand>
        <name>Mg(2+)</name>
        <dbReference type="ChEBI" id="CHEBI:18420"/>
    </ligand>
</feature>
<feature type="binding site" evidence="1">
    <location>
        <begin position="284"/>
        <end position="287"/>
    </location>
    <ligand>
        <name>GTP</name>
        <dbReference type="ChEBI" id="CHEBI:37565"/>
    </ligand>
</feature>
<feature type="binding site" evidence="1">
    <location>
        <position position="468"/>
    </location>
    <ligand>
        <name>(6S)-5-formyl-5,6,7,8-tetrahydrofolate</name>
        <dbReference type="ChEBI" id="CHEBI:57457"/>
    </ligand>
</feature>
<protein>
    <recommendedName>
        <fullName evidence="1">tRNA modification GTPase MnmE</fullName>
        <ecNumber evidence="1">3.6.-.-</ecNumber>
    </recommendedName>
</protein>
<evidence type="ECO:0000255" key="1">
    <source>
        <dbReference type="HAMAP-Rule" id="MF_00379"/>
    </source>
</evidence>
<name>MNME_HALHL</name>
<organism>
    <name type="scientific">Halorhodospira halophila (strain DSM 244 / SL1)</name>
    <name type="common">Ectothiorhodospira halophila (strain DSM 244 / SL1)</name>
    <dbReference type="NCBI Taxonomy" id="349124"/>
    <lineage>
        <taxon>Bacteria</taxon>
        <taxon>Pseudomonadati</taxon>
        <taxon>Pseudomonadota</taxon>
        <taxon>Gammaproteobacteria</taxon>
        <taxon>Chromatiales</taxon>
        <taxon>Ectothiorhodospiraceae</taxon>
        <taxon>Halorhodospira</taxon>
    </lineage>
</organism>
<proteinExistence type="inferred from homology"/>
<dbReference type="EC" id="3.6.-.-" evidence="1"/>
<dbReference type="EMBL" id="CP000544">
    <property type="protein sequence ID" value="ABM62006.1"/>
    <property type="molecule type" value="Genomic_DNA"/>
</dbReference>
<dbReference type="RefSeq" id="WP_011814029.1">
    <property type="nucleotide sequence ID" value="NC_008789.1"/>
</dbReference>
<dbReference type="SMR" id="A1WWE4"/>
<dbReference type="STRING" id="349124.Hhal_1231"/>
<dbReference type="KEGG" id="hha:Hhal_1231"/>
<dbReference type="eggNOG" id="COG0486">
    <property type="taxonomic scope" value="Bacteria"/>
</dbReference>
<dbReference type="HOGENOM" id="CLU_019624_4_1_6"/>
<dbReference type="OrthoDB" id="9805918at2"/>
<dbReference type="Proteomes" id="UP000000647">
    <property type="component" value="Chromosome"/>
</dbReference>
<dbReference type="GO" id="GO:0005737">
    <property type="term" value="C:cytoplasm"/>
    <property type="evidence" value="ECO:0007669"/>
    <property type="project" value="UniProtKB-SubCell"/>
</dbReference>
<dbReference type="GO" id="GO:0005525">
    <property type="term" value="F:GTP binding"/>
    <property type="evidence" value="ECO:0007669"/>
    <property type="project" value="UniProtKB-UniRule"/>
</dbReference>
<dbReference type="GO" id="GO:0003924">
    <property type="term" value="F:GTPase activity"/>
    <property type="evidence" value="ECO:0007669"/>
    <property type="project" value="UniProtKB-UniRule"/>
</dbReference>
<dbReference type="GO" id="GO:0046872">
    <property type="term" value="F:metal ion binding"/>
    <property type="evidence" value="ECO:0007669"/>
    <property type="project" value="UniProtKB-KW"/>
</dbReference>
<dbReference type="GO" id="GO:0030488">
    <property type="term" value="P:tRNA methylation"/>
    <property type="evidence" value="ECO:0007669"/>
    <property type="project" value="TreeGrafter"/>
</dbReference>
<dbReference type="GO" id="GO:0002098">
    <property type="term" value="P:tRNA wobble uridine modification"/>
    <property type="evidence" value="ECO:0007669"/>
    <property type="project" value="TreeGrafter"/>
</dbReference>
<dbReference type="CDD" id="cd04164">
    <property type="entry name" value="trmE"/>
    <property type="match status" value="1"/>
</dbReference>
<dbReference type="CDD" id="cd14858">
    <property type="entry name" value="TrmE_N"/>
    <property type="match status" value="1"/>
</dbReference>
<dbReference type="Gene3D" id="3.40.50.300">
    <property type="entry name" value="P-loop containing nucleotide triphosphate hydrolases"/>
    <property type="match status" value="1"/>
</dbReference>
<dbReference type="Gene3D" id="3.30.1360.120">
    <property type="entry name" value="Probable tRNA modification gtpase trme, domain 1"/>
    <property type="match status" value="1"/>
</dbReference>
<dbReference type="Gene3D" id="1.20.120.430">
    <property type="entry name" value="tRNA modification GTPase MnmE domain 2"/>
    <property type="match status" value="1"/>
</dbReference>
<dbReference type="HAMAP" id="MF_00379">
    <property type="entry name" value="GTPase_MnmE"/>
    <property type="match status" value="1"/>
</dbReference>
<dbReference type="InterPro" id="IPR031168">
    <property type="entry name" value="G_TrmE"/>
</dbReference>
<dbReference type="InterPro" id="IPR006073">
    <property type="entry name" value="GTP-bd"/>
</dbReference>
<dbReference type="InterPro" id="IPR018948">
    <property type="entry name" value="GTP-bd_TrmE_N"/>
</dbReference>
<dbReference type="InterPro" id="IPR004520">
    <property type="entry name" value="GTPase_MnmE"/>
</dbReference>
<dbReference type="InterPro" id="IPR027368">
    <property type="entry name" value="MnmE_dom2"/>
</dbReference>
<dbReference type="InterPro" id="IPR025867">
    <property type="entry name" value="MnmE_helical"/>
</dbReference>
<dbReference type="InterPro" id="IPR027417">
    <property type="entry name" value="P-loop_NTPase"/>
</dbReference>
<dbReference type="InterPro" id="IPR005225">
    <property type="entry name" value="Small_GTP-bd"/>
</dbReference>
<dbReference type="InterPro" id="IPR027266">
    <property type="entry name" value="TrmE/GcvT_dom1"/>
</dbReference>
<dbReference type="NCBIfam" id="TIGR00450">
    <property type="entry name" value="mnmE_trmE_thdF"/>
    <property type="match status" value="1"/>
</dbReference>
<dbReference type="NCBIfam" id="NF003661">
    <property type="entry name" value="PRK05291.1-3"/>
    <property type="match status" value="1"/>
</dbReference>
<dbReference type="NCBIfam" id="TIGR00231">
    <property type="entry name" value="small_GTP"/>
    <property type="match status" value="1"/>
</dbReference>
<dbReference type="PANTHER" id="PTHR42714">
    <property type="entry name" value="TRNA MODIFICATION GTPASE GTPBP3"/>
    <property type="match status" value="1"/>
</dbReference>
<dbReference type="PANTHER" id="PTHR42714:SF2">
    <property type="entry name" value="TRNA MODIFICATION GTPASE GTPBP3, MITOCHONDRIAL"/>
    <property type="match status" value="1"/>
</dbReference>
<dbReference type="Pfam" id="PF01926">
    <property type="entry name" value="MMR_HSR1"/>
    <property type="match status" value="1"/>
</dbReference>
<dbReference type="Pfam" id="PF12631">
    <property type="entry name" value="MnmE_helical"/>
    <property type="match status" value="1"/>
</dbReference>
<dbReference type="Pfam" id="PF10396">
    <property type="entry name" value="TrmE_N"/>
    <property type="match status" value="1"/>
</dbReference>
<dbReference type="PRINTS" id="PR00326">
    <property type="entry name" value="GTP1OBG"/>
</dbReference>
<dbReference type="SUPFAM" id="SSF52540">
    <property type="entry name" value="P-loop containing nucleoside triphosphate hydrolases"/>
    <property type="match status" value="1"/>
</dbReference>
<dbReference type="SUPFAM" id="SSF116878">
    <property type="entry name" value="TrmE connector domain"/>
    <property type="match status" value="1"/>
</dbReference>
<dbReference type="PROSITE" id="PS51709">
    <property type="entry name" value="G_TRME"/>
    <property type="match status" value="1"/>
</dbReference>
<reference key="1">
    <citation type="submission" date="2006-12" db="EMBL/GenBank/DDBJ databases">
        <title>Complete sequence of Halorhodospira halophila SL1.</title>
        <authorList>
            <consortium name="US DOE Joint Genome Institute"/>
            <person name="Copeland A."/>
            <person name="Lucas S."/>
            <person name="Lapidus A."/>
            <person name="Barry K."/>
            <person name="Detter J.C."/>
            <person name="Glavina del Rio T."/>
            <person name="Hammon N."/>
            <person name="Israni S."/>
            <person name="Dalin E."/>
            <person name="Tice H."/>
            <person name="Pitluck S."/>
            <person name="Saunders E."/>
            <person name="Brettin T."/>
            <person name="Bruce D."/>
            <person name="Han C."/>
            <person name="Tapia R."/>
            <person name="Schmutz J."/>
            <person name="Larimer F."/>
            <person name="Land M."/>
            <person name="Hauser L."/>
            <person name="Kyrpides N."/>
            <person name="Mikhailova N."/>
            <person name="Hoff W."/>
            <person name="Richardson P."/>
        </authorList>
    </citation>
    <scope>NUCLEOTIDE SEQUENCE [LARGE SCALE GENOMIC DNA]</scope>
    <source>
        <strain>DSM 244 / SL1</strain>
    </source>
</reference>
<sequence length="469" mass="49183">MVHTASGREVRHGLEDDDADTICAMATPSGQGGVAVVRVSGSRALEVAEEVAGPLPAPREAGLRRFRDARGETLDHGLVLVFPGPGSYTGEDVVELQGHGSPAAVTAVLEALCAAGARPAGPGEFSERAFLNGRLDLTQAEAVASLIEAETDGARRAALRALSGAFGQRVDGLADRMIDLRALIEAFLDFPEDEDVPADPPELAAEIEALGSELAEIRRRAAAGVRFGEGIRVALVGPPNAGKSSLLNVLSGEEAAIVSAQAGTTRDVVRQWAALGSRHAELLDTAGLRDAEAQDEIEAEGARRARAAASEADLLLVVIEAGKTLDEELRARIAEQAPRPVVVIVNKIDASGDEAGWEGESEVGAHVRRARVSAHTGAGIEALRRGLAALVDREAGEDAWAARHRHIEALDRAGEELEEALVVARRGGQEELVAEALRRAQTALGEITGRVSHEALLGRIFSGFCIGKE</sequence>
<comment type="function">
    <text evidence="1">Exhibits a very high intrinsic GTPase hydrolysis rate. Involved in the addition of a carboxymethylaminomethyl (cmnm) group at the wobble position (U34) of certain tRNAs, forming tRNA-cmnm(5)s(2)U34.</text>
</comment>
<comment type="cofactor">
    <cofactor evidence="1">
        <name>K(+)</name>
        <dbReference type="ChEBI" id="CHEBI:29103"/>
    </cofactor>
    <text evidence="1">Binds 1 potassium ion per subunit.</text>
</comment>
<comment type="subunit">
    <text evidence="1">Homodimer. Heterotetramer of two MnmE and two MnmG subunits.</text>
</comment>
<comment type="subcellular location">
    <subcellularLocation>
        <location evidence="1">Cytoplasm</location>
    </subcellularLocation>
</comment>
<comment type="similarity">
    <text evidence="1">Belongs to the TRAFAC class TrmE-Era-EngA-EngB-Septin-like GTPase superfamily. TrmE GTPase family.</text>
</comment>